<sequence length="828" mass="97529">MIEKLTIKRSRQKVIAYSVIIIWLMIVNIWLLNNYHLNSSTLTRHGNGDNLIDEDDDSSSSSEYSIYNELDTENYLGQQHQEEDVPNSQSTDNSLIKPTSPAKNSFKDDITIKILQKHLQKQQNNPKDIRTKDSHAEIYNQIFENHPQIDTILGNLNFNQRCQLFFQNLFIKDNNWILNVKDKKIKLENKNDFKFNDFKKSHLNEFKRQFKTMKKLLEPNKIIHNKDFDNSIEFQDFIKMKYEQFWNRTMTYEQKIVDSISILRIFNKCYLIEEATSTTTTKNNKQDFIKDQFKLVDGIRRASKKNPSLPKFKPTKQEQMVNFDNENLSPSILEHRVYPWLSFEYPVYERWTGKVQYQPPKMANYVKDGNQKTTKKTKYNNDKYLSSFFLNRLKQKCNGRGLVLSISDLHVDVTVRLIHLLRALNNRYPIQIVYYDNLSKETKEKIVTAAREVMSHVPKSFERVAKYFPDDYLDNDQGGLPKQEIWFINTYNVIHADYKLQFRGFANKFLATLFNSFDEFILLDADTVLTQSPSYFFNLPQYLETGTFFYKDRTTYETRPKSDSIFFEKLGPSVIDSVMFNIPIMTSYTLNRSFFKGLFHYMESGLVVLNRDMHYSSFLTMVQMNFFEPVNSRIHGDKEIFWLAMAINGKQNYYFDENYAAAVGVMTPDIERTKPDKTLHESKELCSPHPGHISHDDNSLVWLNSGFFYCGQNDKVKFVEEFKHKSRLKHLNTLEAFKTFYYSPLRIENAIIPPMDLDIWAANNEDEPAKGWFGDPRYCSGYMWCAYDKIGGKTKSGKNTRLEGKIINFDEQAQDLFNYYGDVWVGME</sequence>
<proteinExistence type="inferred from homology"/>
<keyword id="KW-0325">Glycoprotein</keyword>
<keyword id="KW-0328">Glycosyltransferase</keyword>
<keyword id="KW-0333">Golgi apparatus</keyword>
<keyword id="KW-0472">Membrane</keyword>
<keyword id="KW-1185">Reference proteome</keyword>
<keyword id="KW-0735">Signal-anchor</keyword>
<keyword id="KW-0808">Transferase</keyword>
<keyword id="KW-0812">Transmembrane</keyword>
<keyword id="KW-1133">Transmembrane helix</keyword>
<comment type="function">
    <text evidence="1">Responsible for addition of the terminal mannose residues to the outer chain of core N-linked polysaccharides and to O-linked mannotriose. Implicated in late Golgi modifications (By similarity).</text>
</comment>
<comment type="pathway">
    <text>Protein modification; protein glycosylation.</text>
</comment>
<comment type="subcellular location">
    <subcellularLocation>
        <location evidence="1">Golgi apparatus membrane</location>
        <topology evidence="1">Single-pass type II membrane protein</topology>
    </subcellularLocation>
</comment>
<comment type="similarity">
    <text evidence="4">Belongs to the MNN1/MNT family.</text>
</comment>
<gene>
    <name type="primary">MNN12</name>
    <name type="ordered locus">CAALFM_C110300WA</name>
    <name type="ORF">CaO19.12366</name>
    <name type="ORF">CaO19.4900</name>
</gene>
<evidence type="ECO:0000250" key="1"/>
<evidence type="ECO:0000255" key="2"/>
<evidence type="ECO:0000256" key="3">
    <source>
        <dbReference type="SAM" id="MobiDB-lite"/>
    </source>
</evidence>
<evidence type="ECO:0000305" key="4"/>
<organism>
    <name type="scientific">Candida albicans (strain SC5314 / ATCC MYA-2876)</name>
    <name type="common">Yeast</name>
    <dbReference type="NCBI Taxonomy" id="237561"/>
    <lineage>
        <taxon>Eukaryota</taxon>
        <taxon>Fungi</taxon>
        <taxon>Dikarya</taxon>
        <taxon>Ascomycota</taxon>
        <taxon>Saccharomycotina</taxon>
        <taxon>Pichiomycetes</taxon>
        <taxon>Debaryomycetaceae</taxon>
        <taxon>Candida/Lodderomyces clade</taxon>
        <taxon>Candida</taxon>
    </lineage>
</organism>
<reference key="1">
    <citation type="journal article" date="2004" name="Proc. Natl. Acad. Sci. U.S.A.">
        <title>The diploid genome sequence of Candida albicans.</title>
        <authorList>
            <person name="Jones T."/>
            <person name="Federspiel N.A."/>
            <person name="Chibana H."/>
            <person name="Dungan J."/>
            <person name="Kalman S."/>
            <person name="Magee B.B."/>
            <person name="Newport G."/>
            <person name="Thorstenson Y.R."/>
            <person name="Agabian N."/>
            <person name="Magee P.T."/>
            <person name="Davis R.W."/>
            <person name="Scherer S."/>
        </authorList>
    </citation>
    <scope>NUCLEOTIDE SEQUENCE [LARGE SCALE GENOMIC DNA]</scope>
    <source>
        <strain>SC5314 / ATCC MYA-2876</strain>
    </source>
</reference>
<reference key="2">
    <citation type="journal article" date="2007" name="Genome Biol.">
        <title>Assembly of the Candida albicans genome into sixteen supercontigs aligned on the eight chromosomes.</title>
        <authorList>
            <person name="van het Hoog M."/>
            <person name="Rast T.J."/>
            <person name="Martchenko M."/>
            <person name="Grindle S."/>
            <person name="Dignard D."/>
            <person name="Hogues H."/>
            <person name="Cuomo C."/>
            <person name="Berriman M."/>
            <person name="Scherer S."/>
            <person name="Magee B.B."/>
            <person name="Whiteway M."/>
            <person name="Chibana H."/>
            <person name="Nantel A."/>
            <person name="Magee P.T."/>
        </authorList>
    </citation>
    <scope>GENOME REANNOTATION</scope>
    <source>
        <strain>SC5314 / ATCC MYA-2876</strain>
    </source>
</reference>
<reference key="3">
    <citation type="journal article" date="2013" name="Genome Biol.">
        <title>Assembly of a phased diploid Candida albicans genome facilitates allele-specific measurements and provides a simple model for repeat and indel structure.</title>
        <authorList>
            <person name="Muzzey D."/>
            <person name="Schwartz K."/>
            <person name="Weissman J.S."/>
            <person name="Sherlock G."/>
        </authorList>
    </citation>
    <scope>NUCLEOTIDE SEQUENCE [LARGE SCALE GENOMIC DNA]</scope>
    <scope>GENOME REANNOTATION</scope>
    <source>
        <strain>SC5314 / ATCC MYA-2876</strain>
    </source>
</reference>
<reference key="4">
    <citation type="journal article" date="2013" name="BMC Res. Notes">
        <title>Role of the Candida albicans MNN1 gene family in cell wall structure and virulence.</title>
        <authorList>
            <person name="Bates S."/>
            <person name="Hall R.A."/>
            <person name="Cheetham J."/>
            <person name="Netea M.G."/>
            <person name="MacCallum D.M."/>
            <person name="Brown A.J."/>
            <person name="Odds F.C."/>
            <person name="Gow N.A."/>
        </authorList>
    </citation>
    <scope>IDENTIFICATION</scope>
</reference>
<dbReference type="EC" id="2.4.1.-"/>
<dbReference type="EMBL" id="CP017623">
    <property type="protein sequence ID" value="AOW26660.1"/>
    <property type="molecule type" value="Genomic_DNA"/>
</dbReference>
<dbReference type="RefSeq" id="XP_723582.2">
    <property type="nucleotide sequence ID" value="XM_718489.2"/>
</dbReference>
<dbReference type="SMR" id="Q5APQ8"/>
<dbReference type="FunCoup" id="Q5APQ8">
    <property type="interactions" value="55"/>
</dbReference>
<dbReference type="STRING" id="237561.Q5APQ8"/>
<dbReference type="GlyCosmos" id="Q5APQ8">
    <property type="glycosylation" value="4 sites, No reported glycans"/>
</dbReference>
<dbReference type="EnsemblFungi" id="C1_10300W_A-T">
    <property type="protein sequence ID" value="C1_10300W_A-T-p1"/>
    <property type="gene ID" value="C1_10300W_A"/>
</dbReference>
<dbReference type="GeneID" id="3634904"/>
<dbReference type="KEGG" id="cal:CAALFM_C110300WA"/>
<dbReference type="CGD" id="CAL0000176287">
    <property type="gene designation" value="MNN12"/>
</dbReference>
<dbReference type="VEuPathDB" id="FungiDB:C1_10300W_A"/>
<dbReference type="eggNOG" id="ENOG502RZ48">
    <property type="taxonomic scope" value="Eukaryota"/>
</dbReference>
<dbReference type="HOGENOM" id="CLU_015387_0_0_1"/>
<dbReference type="InParanoid" id="Q5APQ8"/>
<dbReference type="OrthoDB" id="430354at2759"/>
<dbReference type="UniPathway" id="UPA00378"/>
<dbReference type="PHI-base" id="PHI:3691"/>
<dbReference type="PRO" id="PR:Q5APQ8"/>
<dbReference type="Proteomes" id="UP000000559">
    <property type="component" value="Chromosome 1"/>
</dbReference>
<dbReference type="GO" id="GO:0005794">
    <property type="term" value="C:Golgi apparatus"/>
    <property type="evidence" value="ECO:0000318"/>
    <property type="project" value="GO_Central"/>
</dbReference>
<dbReference type="GO" id="GO:0000139">
    <property type="term" value="C:Golgi membrane"/>
    <property type="evidence" value="ECO:0007669"/>
    <property type="project" value="UniProtKB-SubCell"/>
</dbReference>
<dbReference type="GO" id="GO:0000033">
    <property type="term" value="F:alpha-1,3-mannosyltransferase activity"/>
    <property type="evidence" value="ECO:0000318"/>
    <property type="project" value="GO_Central"/>
</dbReference>
<dbReference type="GO" id="GO:0046354">
    <property type="term" value="P:mannan biosynthetic process"/>
    <property type="evidence" value="ECO:0007669"/>
    <property type="project" value="UniProtKB-ARBA"/>
</dbReference>
<dbReference type="GO" id="GO:0035268">
    <property type="term" value="P:protein mannosylation"/>
    <property type="evidence" value="ECO:0007669"/>
    <property type="project" value="UniProtKB-ARBA"/>
</dbReference>
<dbReference type="GO" id="GO:0006493">
    <property type="term" value="P:protein O-linked glycosylation"/>
    <property type="evidence" value="ECO:0000318"/>
    <property type="project" value="GO_Central"/>
</dbReference>
<dbReference type="Gene3D" id="3.90.550.10">
    <property type="entry name" value="Spore Coat Polysaccharide Biosynthesis Protein SpsA, Chain A"/>
    <property type="match status" value="1"/>
</dbReference>
<dbReference type="InterPro" id="IPR022751">
    <property type="entry name" value="Alpha_mannosyltransferase"/>
</dbReference>
<dbReference type="InterPro" id="IPR029044">
    <property type="entry name" value="Nucleotide-diphossugar_trans"/>
</dbReference>
<dbReference type="PANTHER" id="PTHR31392">
    <property type="entry name" value="ALPHA-1,3-MANNOSYLTRANSFERASE MNN1-RELATED"/>
    <property type="match status" value="1"/>
</dbReference>
<dbReference type="PANTHER" id="PTHR31392:SF1">
    <property type="entry name" value="ALPHA-1,3-MANNOSYLTRANSFERASE MNN1-RELATED"/>
    <property type="match status" value="1"/>
</dbReference>
<dbReference type="Pfam" id="PF11051">
    <property type="entry name" value="Mannosyl_trans3"/>
    <property type="match status" value="1"/>
</dbReference>
<dbReference type="SUPFAM" id="SSF53448">
    <property type="entry name" value="Nucleotide-diphospho-sugar transferases"/>
    <property type="match status" value="1"/>
</dbReference>
<feature type="chain" id="PRO_0000424325" description="Putative alpha-1,3-mannosyltransferase MNN12">
    <location>
        <begin position="1"/>
        <end position="828"/>
    </location>
</feature>
<feature type="topological domain" description="Cytoplasmic" evidence="2">
    <location>
        <begin position="1"/>
        <end position="13"/>
    </location>
</feature>
<feature type="transmembrane region" description="Helical" evidence="2">
    <location>
        <begin position="14"/>
        <end position="34"/>
    </location>
</feature>
<feature type="topological domain" description="Lumenal" evidence="2">
    <location>
        <begin position="35"/>
        <end position="828"/>
    </location>
</feature>
<feature type="region of interest" description="Disordered" evidence="3">
    <location>
        <begin position="80"/>
        <end position="104"/>
    </location>
</feature>
<feature type="compositionally biased region" description="Polar residues" evidence="3">
    <location>
        <begin position="86"/>
        <end position="103"/>
    </location>
</feature>
<feature type="glycosylation site" description="N-linked (GlcNAc...) asparagine" evidence="2">
    <location>
        <position position="38"/>
    </location>
</feature>
<feature type="glycosylation site" description="N-linked (GlcNAc...) asparagine" evidence="2">
    <location>
        <position position="247"/>
    </location>
</feature>
<feature type="glycosylation site" description="N-linked (GlcNAc...) asparagine" evidence="2">
    <location>
        <position position="437"/>
    </location>
</feature>
<feature type="glycosylation site" description="N-linked (GlcNAc...) asparagine" evidence="2">
    <location>
        <position position="591"/>
    </location>
</feature>
<name>MNN12_CANAL</name>
<protein>
    <recommendedName>
        <fullName>Putative alpha-1,3-mannosyltransferase MNN12</fullName>
        <ecNumber>2.4.1.-</ecNumber>
    </recommendedName>
</protein>
<accession>Q5APQ8</accession>
<accession>A0A1D8PEX9</accession>
<accession>Q5AP62</accession>